<sequence>MKSALKTFVPGALALLLLFPVAAQAKEVETKTKLANVVILATGGTIAGAGASAANSATYQAAKVGIEQLIAGVPELSQIANVRGEQVMQIASESINNENLLQLGRRVAELADSKDVDGIVITHGTDTLEETAYFLNLVEKTDKPIIVVGSMRPGTAMSADGMLNLYNAVAVAGSKDARGKGVLVTMNDEIQSGRDVSKMINIKTEAFKSPWGPLGMVVEGKSYWFRLPAKRHTMDSEFDIKTIKSLPDVEIAYGYGNVSDTAVKALAQAGAKAIIHAGTGNGSVSSKVVPALQELRKQGVQIIRSSHVNAGGFVLRNAEQPDDKYDWVVAHDLNPQKARILAMVALTKTQDSKELQRMFWEY</sequence>
<reference key="1">
    <citation type="journal article" date="1999" name="FEMS Microbiol. Lett.">
        <title>Cloning, sequence analysis, and expression of ansB from Pseudomonas fluorescens, encoding periplasmic glutaminase/asparaginase.</title>
        <authorList>
            <person name="Hueser A."/>
            <person name="Kloeppner U."/>
            <person name="Roehm K.H."/>
        </authorList>
    </citation>
    <scope>NUCLEOTIDE SEQUENCE [GENOMIC DNA]</scope>
    <scope>PROTEIN SEQUENCE OF 26-31</scope>
    <scope>CATALYTIC ACTIVITY</scope>
    <scope>SUBCELLULAR LOCATION</scope>
    <scope>INDUCTION</scope>
    <source>
        <strain>ATCC 13525 / DSM 50090 / JCM 5963 / NBRC 14160 / NCIMB 9046 / NCTC 10038 / VKM B-894</strain>
    </source>
</reference>
<organism>
    <name type="scientific">Pseudomonas fluorescens biotype A</name>
    <dbReference type="NCBI Taxonomy" id="32035"/>
    <lineage>
        <taxon>Bacteria</taxon>
        <taxon>Pseudomonadati</taxon>
        <taxon>Pseudomonadota</taxon>
        <taxon>Gammaproteobacteria</taxon>
        <taxon>Pseudomonadales</taxon>
        <taxon>Pseudomonadaceae</taxon>
        <taxon>Pseudomonas</taxon>
    </lineage>
</organism>
<name>ASPQ_PSEFA</name>
<keyword id="KW-0903">Direct protein sequencing</keyword>
<keyword id="KW-0378">Hydrolase</keyword>
<keyword id="KW-0574">Periplasm</keyword>
<keyword id="KW-0732">Signal</keyword>
<comment type="catalytic activity">
    <reaction evidence="4">
        <text>L-glutamine + H2O = L-glutamate + NH4(+)</text>
        <dbReference type="Rhea" id="RHEA:15889"/>
        <dbReference type="ChEBI" id="CHEBI:15377"/>
        <dbReference type="ChEBI" id="CHEBI:28938"/>
        <dbReference type="ChEBI" id="CHEBI:29985"/>
        <dbReference type="ChEBI" id="CHEBI:58359"/>
        <dbReference type="EC" id="3.5.1.38"/>
    </reaction>
</comment>
<comment type="catalytic activity">
    <reaction evidence="4">
        <text>L-asparagine + H2O = L-aspartate + NH4(+)</text>
        <dbReference type="Rhea" id="RHEA:21016"/>
        <dbReference type="ChEBI" id="CHEBI:15377"/>
        <dbReference type="ChEBI" id="CHEBI:28938"/>
        <dbReference type="ChEBI" id="CHEBI:29991"/>
        <dbReference type="ChEBI" id="CHEBI:58048"/>
        <dbReference type="EC" id="3.5.1.38"/>
    </reaction>
</comment>
<comment type="subunit">
    <text evidence="2">Homotetramer.</text>
</comment>
<comment type="subcellular location">
    <subcellularLocation>
        <location evidence="4">Periplasm</location>
    </subcellularLocation>
</comment>
<comment type="induction">
    <text evidence="4">Induced by glutamate, via the alternate sigma factor 54.</text>
</comment>
<comment type="similarity">
    <text evidence="6">Belongs to the asparaginase 1 family.</text>
</comment>
<evidence type="ECO:0000250" key="1"/>
<evidence type="ECO:0000250" key="2">
    <source>
        <dbReference type="UniProtKB" id="P10182"/>
    </source>
</evidence>
<evidence type="ECO:0000255" key="3">
    <source>
        <dbReference type="PROSITE-ProRule" id="PRU01068"/>
    </source>
</evidence>
<evidence type="ECO:0000269" key="4">
    <source>
    </source>
</evidence>
<evidence type="ECO:0000303" key="5">
    <source>
    </source>
</evidence>
<evidence type="ECO:0000305" key="6"/>
<dbReference type="EC" id="3.5.1.38" evidence="4"/>
<dbReference type="EMBL" id="AF056495">
    <property type="protein sequence ID" value="AAC33155.1"/>
    <property type="molecule type" value="Genomic_DNA"/>
</dbReference>
<dbReference type="SMR" id="O68897"/>
<dbReference type="GO" id="GO:0042597">
    <property type="term" value="C:periplasmic space"/>
    <property type="evidence" value="ECO:0007669"/>
    <property type="project" value="UniProtKB-SubCell"/>
</dbReference>
<dbReference type="GO" id="GO:0004067">
    <property type="term" value="F:asparaginase activity"/>
    <property type="evidence" value="ECO:0007669"/>
    <property type="project" value="InterPro"/>
</dbReference>
<dbReference type="GO" id="GO:0050417">
    <property type="term" value="F:glutamin-(asparagin-)ase activity"/>
    <property type="evidence" value="ECO:0007669"/>
    <property type="project" value="UniProtKB-EC"/>
</dbReference>
<dbReference type="GO" id="GO:0004359">
    <property type="term" value="F:glutaminase activity"/>
    <property type="evidence" value="ECO:0007669"/>
    <property type="project" value="RHEA"/>
</dbReference>
<dbReference type="GO" id="GO:0006528">
    <property type="term" value="P:asparagine metabolic process"/>
    <property type="evidence" value="ECO:0007669"/>
    <property type="project" value="InterPro"/>
</dbReference>
<dbReference type="CDD" id="cd00411">
    <property type="entry name" value="L-asparaginase_like"/>
    <property type="match status" value="1"/>
</dbReference>
<dbReference type="FunFam" id="3.40.50.1170:FF:000001">
    <property type="entry name" value="L-asparaginase 2"/>
    <property type="match status" value="1"/>
</dbReference>
<dbReference type="Gene3D" id="3.40.50.40">
    <property type="match status" value="1"/>
</dbReference>
<dbReference type="Gene3D" id="3.40.50.1170">
    <property type="entry name" value="L-asparaginase, N-terminal domain"/>
    <property type="match status" value="1"/>
</dbReference>
<dbReference type="InterPro" id="IPR004550">
    <property type="entry name" value="AsnASE_II"/>
</dbReference>
<dbReference type="InterPro" id="IPR036152">
    <property type="entry name" value="Asp/glu_Ase-like_sf"/>
</dbReference>
<dbReference type="InterPro" id="IPR006034">
    <property type="entry name" value="Asparaginase/glutaminase-like"/>
</dbReference>
<dbReference type="InterPro" id="IPR020827">
    <property type="entry name" value="Asparaginase/glutaminase_AS1"/>
</dbReference>
<dbReference type="InterPro" id="IPR027475">
    <property type="entry name" value="Asparaginase/glutaminase_AS2"/>
</dbReference>
<dbReference type="InterPro" id="IPR040919">
    <property type="entry name" value="Asparaginase_C"/>
</dbReference>
<dbReference type="InterPro" id="IPR027473">
    <property type="entry name" value="L-asparaginase_C"/>
</dbReference>
<dbReference type="InterPro" id="IPR027474">
    <property type="entry name" value="L-asparaginase_N"/>
</dbReference>
<dbReference type="InterPro" id="IPR037152">
    <property type="entry name" value="L-asparaginase_N_sf"/>
</dbReference>
<dbReference type="NCBIfam" id="TIGR00520">
    <property type="entry name" value="asnASE_II"/>
    <property type="match status" value="1"/>
</dbReference>
<dbReference type="PANTHER" id="PTHR11707:SF28">
    <property type="entry name" value="60 KDA LYSOPHOSPHOLIPASE"/>
    <property type="match status" value="1"/>
</dbReference>
<dbReference type="PANTHER" id="PTHR11707">
    <property type="entry name" value="L-ASPARAGINASE"/>
    <property type="match status" value="1"/>
</dbReference>
<dbReference type="Pfam" id="PF00710">
    <property type="entry name" value="Asparaginase"/>
    <property type="match status" value="1"/>
</dbReference>
<dbReference type="Pfam" id="PF17763">
    <property type="entry name" value="Asparaginase_C"/>
    <property type="match status" value="1"/>
</dbReference>
<dbReference type="PIRSF" id="PIRSF001220">
    <property type="entry name" value="L-ASNase_gatD"/>
    <property type="match status" value="1"/>
</dbReference>
<dbReference type="PIRSF" id="PIRSF500176">
    <property type="entry name" value="L_ASNase"/>
    <property type="match status" value="1"/>
</dbReference>
<dbReference type="PRINTS" id="PR00139">
    <property type="entry name" value="ASNGLNASE"/>
</dbReference>
<dbReference type="SMART" id="SM00870">
    <property type="entry name" value="Asparaginase"/>
    <property type="match status" value="1"/>
</dbReference>
<dbReference type="SUPFAM" id="SSF53774">
    <property type="entry name" value="Glutaminase/Asparaginase"/>
    <property type="match status" value="1"/>
</dbReference>
<dbReference type="PROSITE" id="PS00144">
    <property type="entry name" value="ASN_GLN_ASE_1"/>
    <property type="match status" value="1"/>
</dbReference>
<dbReference type="PROSITE" id="PS00917">
    <property type="entry name" value="ASN_GLN_ASE_2"/>
    <property type="match status" value="1"/>
</dbReference>
<dbReference type="PROSITE" id="PS51732">
    <property type="entry name" value="ASN_GLN_ASE_3"/>
    <property type="match status" value="1"/>
</dbReference>
<protein>
    <recommendedName>
        <fullName evidence="6">Glutaminase-asparaginase</fullName>
        <ecNumber evidence="4">3.5.1.38</ecNumber>
    </recommendedName>
    <alternativeName>
        <fullName evidence="6">L-ASNase/L-GLNase</fullName>
    </alternativeName>
    <alternativeName>
        <fullName evidence="6">L-asparagine/L-glutamine amidohydrolase</fullName>
    </alternativeName>
</protein>
<feature type="signal peptide" evidence="4">
    <location>
        <begin position="1"/>
        <end position="25"/>
    </location>
</feature>
<feature type="chain" id="PRO_0000002360" description="Glutaminase-asparaginase">
    <location>
        <begin position="26"/>
        <end position="362"/>
    </location>
</feature>
<feature type="domain" description="Asparaginase/glutaminase" evidence="3">
    <location>
        <begin position="35"/>
        <end position="362"/>
    </location>
</feature>
<feature type="active site" description="Acyl-ester intermediate" evidence="2">
    <location>
        <position position="45"/>
    </location>
</feature>
<feature type="binding site" evidence="1">
    <location>
        <position position="92"/>
    </location>
    <ligand>
        <name>substrate</name>
    </ligand>
</feature>
<feature type="binding site" evidence="1">
    <location>
        <begin position="125"/>
        <end position="126"/>
    </location>
    <ligand>
        <name>substrate</name>
    </ligand>
</feature>
<gene>
    <name evidence="5" type="primary">ansB</name>
</gene>
<proteinExistence type="evidence at protein level"/>
<accession>O68897</accession>